<evidence type="ECO:0000255" key="1">
    <source>
        <dbReference type="HAMAP-Rule" id="MF_00075"/>
    </source>
</evidence>
<name>IF1_CERS1</name>
<dbReference type="EMBL" id="CP000577">
    <property type="protein sequence ID" value="ABN77380.1"/>
    <property type="molecule type" value="Genomic_DNA"/>
</dbReference>
<dbReference type="RefSeq" id="WP_002720792.1">
    <property type="nucleotide sequence ID" value="NC_009049.1"/>
</dbReference>
<dbReference type="SMR" id="A3PM14"/>
<dbReference type="GeneID" id="67447372"/>
<dbReference type="KEGG" id="rsh:Rsph17029_2278"/>
<dbReference type="HOGENOM" id="CLU_151267_1_0_5"/>
<dbReference type="GO" id="GO:0005829">
    <property type="term" value="C:cytosol"/>
    <property type="evidence" value="ECO:0007669"/>
    <property type="project" value="TreeGrafter"/>
</dbReference>
<dbReference type="GO" id="GO:0043022">
    <property type="term" value="F:ribosome binding"/>
    <property type="evidence" value="ECO:0007669"/>
    <property type="project" value="UniProtKB-UniRule"/>
</dbReference>
<dbReference type="GO" id="GO:0019843">
    <property type="term" value="F:rRNA binding"/>
    <property type="evidence" value="ECO:0007669"/>
    <property type="project" value="UniProtKB-UniRule"/>
</dbReference>
<dbReference type="GO" id="GO:0003743">
    <property type="term" value="F:translation initiation factor activity"/>
    <property type="evidence" value="ECO:0007669"/>
    <property type="project" value="UniProtKB-UniRule"/>
</dbReference>
<dbReference type="CDD" id="cd04451">
    <property type="entry name" value="S1_IF1"/>
    <property type="match status" value="1"/>
</dbReference>
<dbReference type="FunFam" id="2.40.50.140:FF:000002">
    <property type="entry name" value="Translation initiation factor IF-1"/>
    <property type="match status" value="1"/>
</dbReference>
<dbReference type="Gene3D" id="2.40.50.140">
    <property type="entry name" value="Nucleic acid-binding proteins"/>
    <property type="match status" value="1"/>
</dbReference>
<dbReference type="HAMAP" id="MF_00075">
    <property type="entry name" value="IF_1"/>
    <property type="match status" value="1"/>
</dbReference>
<dbReference type="InterPro" id="IPR012340">
    <property type="entry name" value="NA-bd_OB-fold"/>
</dbReference>
<dbReference type="InterPro" id="IPR006196">
    <property type="entry name" value="RNA-binding_domain_S1_IF1"/>
</dbReference>
<dbReference type="InterPro" id="IPR004368">
    <property type="entry name" value="TIF_IF1"/>
</dbReference>
<dbReference type="NCBIfam" id="TIGR00008">
    <property type="entry name" value="infA"/>
    <property type="match status" value="1"/>
</dbReference>
<dbReference type="PANTHER" id="PTHR33370">
    <property type="entry name" value="TRANSLATION INITIATION FACTOR IF-1, CHLOROPLASTIC"/>
    <property type="match status" value="1"/>
</dbReference>
<dbReference type="PANTHER" id="PTHR33370:SF1">
    <property type="entry name" value="TRANSLATION INITIATION FACTOR IF-1, CHLOROPLASTIC"/>
    <property type="match status" value="1"/>
</dbReference>
<dbReference type="Pfam" id="PF01176">
    <property type="entry name" value="eIF-1a"/>
    <property type="match status" value="1"/>
</dbReference>
<dbReference type="SUPFAM" id="SSF50249">
    <property type="entry name" value="Nucleic acid-binding proteins"/>
    <property type="match status" value="1"/>
</dbReference>
<dbReference type="PROSITE" id="PS50832">
    <property type="entry name" value="S1_IF1_TYPE"/>
    <property type="match status" value="1"/>
</dbReference>
<keyword id="KW-0963">Cytoplasm</keyword>
<keyword id="KW-0396">Initiation factor</keyword>
<keyword id="KW-0648">Protein biosynthesis</keyword>
<keyword id="KW-0694">RNA-binding</keyword>
<keyword id="KW-0699">rRNA-binding</keyword>
<reference key="1">
    <citation type="submission" date="2007-02" db="EMBL/GenBank/DDBJ databases">
        <title>Complete sequence of chromosome 1 of Rhodobacter sphaeroides ATCC 17029.</title>
        <authorList>
            <person name="Copeland A."/>
            <person name="Lucas S."/>
            <person name="Lapidus A."/>
            <person name="Barry K."/>
            <person name="Detter J.C."/>
            <person name="Glavina del Rio T."/>
            <person name="Hammon N."/>
            <person name="Israni S."/>
            <person name="Dalin E."/>
            <person name="Tice H."/>
            <person name="Pitluck S."/>
            <person name="Kiss H."/>
            <person name="Brettin T."/>
            <person name="Bruce D."/>
            <person name="Han C."/>
            <person name="Tapia R."/>
            <person name="Gilna P."/>
            <person name="Schmutz J."/>
            <person name="Larimer F."/>
            <person name="Land M."/>
            <person name="Hauser L."/>
            <person name="Kyrpides N."/>
            <person name="Mikhailova N."/>
            <person name="Richardson P."/>
            <person name="Mackenzie C."/>
            <person name="Choudhary M."/>
            <person name="Donohue T.J."/>
            <person name="Kaplan S."/>
        </authorList>
    </citation>
    <scope>NUCLEOTIDE SEQUENCE [LARGE SCALE GENOMIC DNA]</scope>
    <source>
        <strain>ATCC 17029 / ATH 2.4.9</strain>
    </source>
</reference>
<accession>A3PM14</accession>
<comment type="function">
    <text evidence="1">One of the essential components for the initiation of protein synthesis. Stabilizes the binding of IF-2 and IF-3 on the 30S subunit to which N-formylmethionyl-tRNA(fMet) subsequently binds. Helps modulate mRNA selection, yielding the 30S pre-initiation complex (PIC). Upon addition of the 50S ribosomal subunit IF-1, IF-2 and IF-3 are released leaving the mature 70S translation initiation complex.</text>
</comment>
<comment type="subunit">
    <text evidence="1">Component of the 30S ribosomal translation pre-initiation complex which assembles on the 30S ribosome in the order IF-2 and IF-3, IF-1 and N-formylmethionyl-tRNA(fMet); mRNA recruitment can occur at any time during PIC assembly.</text>
</comment>
<comment type="subcellular location">
    <subcellularLocation>
        <location evidence="1">Cytoplasm</location>
    </subcellularLocation>
</comment>
<comment type="similarity">
    <text evidence="1">Belongs to the IF-1 family.</text>
</comment>
<sequence length="72" mass="8250">MAKEDTLEFPGVVKELLPNATFRVELDNGHELIAVMAGKMRKNRIRVLAGDKVQVEMTPYDLSKGRINYRFK</sequence>
<proteinExistence type="inferred from homology"/>
<feature type="chain" id="PRO_0000338901" description="Translation initiation factor IF-1">
    <location>
        <begin position="1"/>
        <end position="72"/>
    </location>
</feature>
<feature type="domain" description="S1-like" evidence="1">
    <location>
        <begin position="1"/>
        <end position="72"/>
    </location>
</feature>
<organism>
    <name type="scientific">Cereibacter sphaeroides (strain ATCC 17029 / ATH 2.4.9)</name>
    <name type="common">Rhodobacter sphaeroides</name>
    <dbReference type="NCBI Taxonomy" id="349101"/>
    <lineage>
        <taxon>Bacteria</taxon>
        <taxon>Pseudomonadati</taxon>
        <taxon>Pseudomonadota</taxon>
        <taxon>Alphaproteobacteria</taxon>
        <taxon>Rhodobacterales</taxon>
        <taxon>Paracoccaceae</taxon>
        <taxon>Cereibacter</taxon>
    </lineage>
</organism>
<gene>
    <name evidence="1" type="primary">infA</name>
    <name type="ordered locus">Rsph17029_2278</name>
</gene>
<protein>
    <recommendedName>
        <fullName evidence="1">Translation initiation factor IF-1</fullName>
    </recommendedName>
</protein>